<sequence length="87" mass="9479">MKIILWLCVFGLFLATLFPISWQMPVESGLSSEDSASSESFASKIKRHGEGTFTSDLSKQMEEEAVRLFIEWLKNGGPSSGAPPPSG</sequence>
<protein>
    <recommendedName>
        <fullName>Exendin-4</fullName>
    </recommendedName>
</protein>
<name>EXE4_HELSC</name>
<dbReference type="EMBL" id="EU790959">
    <property type="protein sequence ID" value="ACE95061.1"/>
    <property type="molecule type" value="mRNA"/>
</dbReference>
<dbReference type="SMR" id="C6EVG1"/>
<dbReference type="GO" id="GO:0005576">
    <property type="term" value="C:extracellular region"/>
    <property type="evidence" value="ECO:0007669"/>
    <property type="project" value="UniProtKB-SubCell"/>
</dbReference>
<dbReference type="GO" id="GO:0005179">
    <property type="term" value="F:hormone activity"/>
    <property type="evidence" value="ECO:0007669"/>
    <property type="project" value="InterPro"/>
</dbReference>
<dbReference type="GO" id="GO:0090729">
    <property type="term" value="F:toxin activity"/>
    <property type="evidence" value="ECO:0007669"/>
    <property type="project" value="UniProtKB-KW"/>
</dbReference>
<dbReference type="GO" id="GO:0008217">
    <property type="term" value="P:regulation of blood pressure"/>
    <property type="evidence" value="ECO:0007669"/>
    <property type="project" value="UniProtKB-KW"/>
</dbReference>
<dbReference type="Gene3D" id="6.10.250.590">
    <property type="match status" value="1"/>
</dbReference>
<dbReference type="InterPro" id="IPR000532">
    <property type="entry name" value="Glucagon_GIP_secretin_VIP"/>
</dbReference>
<dbReference type="Pfam" id="PF00123">
    <property type="entry name" value="Hormone_2"/>
    <property type="match status" value="1"/>
</dbReference>
<dbReference type="SMART" id="SM00070">
    <property type="entry name" value="GLUCA"/>
    <property type="match status" value="1"/>
</dbReference>
<dbReference type="PROSITE" id="PS00260">
    <property type="entry name" value="GLUCAGON"/>
    <property type="match status" value="1"/>
</dbReference>
<accession>C6EVG1</accession>
<organism>
    <name type="scientific">Heloderma suspectum cinctum</name>
    <name type="common">Banded Gila monster</name>
    <dbReference type="NCBI Taxonomy" id="537493"/>
    <lineage>
        <taxon>Eukaryota</taxon>
        <taxon>Metazoa</taxon>
        <taxon>Chordata</taxon>
        <taxon>Craniata</taxon>
        <taxon>Vertebrata</taxon>
        <taxon>Euteleostomi</taxon>
        <taxon>Lepidosauria</taxon>
        <taxon>Squamata</taxon>
        <taxon>Bifurcata</taxon>
        <taxon>Unidentata</taxon>
        <taxon>Episquamata</taxon>
        <taxon>Toxicofera</taxon>
        <taxon>Anguimorpha</taxon>
        <taxon>Neoanguimorpha</taxon>
        <taxon>Helodermatidae</taxon>
        <taxon>Heloderma</taxon>
    </lineage>
</organism>
<evidence type="ECO:0000250" key="1"/>
<evidence type="ECO:0000255" key="2"/>
<evidence type="ECO:0000269" key="3">
    <source>
    </source>
</evidence>
<evidence type="ECO:0000269" key="4">
    <source>
    </source>
</evidence>
<evidence type="ECO:0000305" key="5"/>
<proteinExistence type="evidence at transcript level"/>
<reference key="1">
    <citation type="journal article" date="2010" name="Mol. Biol. Evol.">
        <title>Novel venom proteins produced by differential domain-expression strategies in beaded lizards and gila monsters (genus Heloderma).</title>
        <authorList>
            <person name="Fry B.G."/>
            <person name="Roelants K."/>
            <person name="Winter K."/>
            <person name="Hodgson W.C."/>
            <person name="Griesman L."/>
            <person name="Kwok H.F."/>
            <person name="Scanlon D."/>
            <person name="Karas J."/>
            <person name="Shaw C."/>
            <person name="Wong L."/>
            <person name="Norman J.A."/>
        </authorList>
    </citation>
    <scope>NUCLEOTIDE SEQUENCE [MRNA]</scope>
    <scope>SYNTHESIS OF 48-86</scope>
    <scope>FUNCTION</scope>
    <source>
        <tissue>Venom gland</tissue>
    </source>
</reference>
<reference key="2">
    <citation type="journal article" date="1993" name="Diabetes">
        <title>Cloning and functional expression of the human islet GLP-1 receptor. Demonstration that exendin-4 is an agonist and exendin-(9-39) an antagonist of the receptor.</title>
        <authorList>
            <person name="Thorens B."/>
            <person name="Porret A."/>
            <person name="Buehler L."/>
            <person name="Deng S."/>
            <person name="Morel P."/>
            <person name="Widmann C."/>
        </authorList>
    </citation>
    <scope>FUNCTION</scope>
</reference>
<keyword id="KW-0027">Amidation</keyword>
<keyword id="KW-0165">Cleavage on pair of basic residues</keyword>
<keyword id="KW-1213">G-protein coupled receptor impairing toxin</keyword>
<keyword id="KW-0382">Hypotensive agent</keyword>
<keyword id="KW-0964">Secreted</keyword>
<keyword id="KW-0732">Signal</keyword>
<keyword id="KW-0800">Toxin</keyword>
<feature type="signal peptide" evidence="2">
    <location>
        <begin position="1"/>
        <end position="23"/>
    </location>
</feature>
<feature type="propeptide" id="PRO_0000414101" evidence="1">
    <location>
        <begin position="24"/>
        <end position="45"/>
    </location>
</feature>
<feature type="peptide" id="PRO_0000414102" description="Exendin-4">
    <location>
        <begin position="48"/>
        <end position="86"/>
    </location>
</feature>
<feature type="modified residue" description="Serine amide" evidence="1">
    <location>
        <position position="86"/>
    </location>
</feature>
<comment type="function">
    <text evidence="3 4">Venom protein that mimics the incretin hormone glucagon-like peptide 1 (GLP-1). It stimulates insulin synthesis and secretion, protects against beta-cell apoptosis in response to different insults, and promotes beta-cell proliferation It also promotes satiety, reduces food intake, reduces fat deposition, reduces body weight and inhibits gastric emptying. Interacts with GLP-1 receptor (GLP1R). Induces hypotension that is mediated by relaxation of cardiac smooth muscle.</text>
</comment>
<comment type="subcellular location">
    <subcellularLocation>
        <location>Secreted</location>
    </subcellularLocation>
</comment>
<comment type="tissue specificity">
    <text>Expressed by the venom gland.</text>
</comment>
<comment type="similarity">
    <text evidence="5">Belongs to the glucagon family.</text>
</comment>